<gene>
    <name evidence="1" type="primary">rpsE</name>
    <name type="ordered locus">HY04AAS1_0282</name>
</gene>
<comment type="function">
    <text evidence="1">With S4 and S12 plays an important role in translational accuracy.</text>
</comment>
<comment type="function">
    <text evidence="1">Located at the back of the 30S subunit body where it stabilizes the conformation of the head with respect to the body.</text>
</comment>
<comment type="subunit">
    <text evidence="1">Part of the 30S ribosomal subunit. Contacts proteins S4 and S8.</text>
</comment>
<comment type="domain">
    <text>The N-terminal domain interacts with the head of the 30S subunit; the C-terminal domain interacts with the body and contacts protein S4. The interaction surface between S4 and S5 is involved in control of translational fidelity.</text>
</comment>
<comment type="similarity">
    <text evidence="1">Belongs to the universal ribosomal protein uS5 family.</text>
</comment>
<keyword id="KW-0687">Ribonucleoprotein</keyword>
<keyword id="KW-0689">Ribosomal protein</keyword>
<keyword id="KW-0694">RNA-binding</keyword>
<keyword id="KW-0699">rRNA-binding</keyword>
<reference key="1">
    <citation type="journal article" date="2009" name="J. Bacteriol.">
        <title>Complete and draft genome sequences of six members of the Aquificales.</title>
        <authorList>
            <person name="Reysenbach A.-L."/>
            <person name="Hamamura N."/>
            <person name="Podar M."/>
            <person name="Griffiths E."/>
            <person name="Ferreira S."/>
            <person name="Hochstein R."/>
            <person name="Heidelberg J."/>
            <person name="Johnson J."/>
            <person name="Mead D."/>
            <person name="Pohorille A."/>
            <person name="Sarmiento M."/>
            <person name="Schweighofer K."/>
            <person name="Seshadri R."/>
            <person name="Voytek M.A."/>
        </authorList>
    </citation>
    <scope>NUCLEOTIDE SEQUENCE [LARGE SCALE GENOMIC DNA]</scope>
    <source>
        <strain>Y04AAS1</strain>
    </source>
</reference>
<proteinExistence type="inferred from homology"/>
<sequence>MGAKDLNQRIDAKRIEQGITTLDDIQFEERLLEAARTTRVTKGGKRFSFSALVVIGDKRGYVGFGLGKAREVPLSIAKAIEDAKKKTIRVPIVNGTIPHDVVGEYGSARIIAFPARRGTGVIAGGAAKPIFELAGYTDVLTKVVGSSNHHNVVRAVFDALLKLRDIDAIAKVKGATVEDLRERYNIYAR</sequence>
<feature type="chain" id="PRO_1000140863" description="Small ribosomal subunit protein uS5">
    <location>
        <begin position="1"/>
        <end position="189"/>
    </location>
</feature>
<feature type="domain" description="S5 DRBM" evidence="1">
    <location>
        <begin position="27"/>
        <end position="90"/>
    </location>
</feature>
<protein>
    <recommendedName>
        <fullName evidence="1">Small ribosomal subunit protein uS5</fullName>
    </recommendedName>
    <alternativeName>
        <fullName evidence="2">30S ribosomal protein S5</fullName>
    </alternativeName>
</protein>
<accession>B4U761</accession>
<organism>
    <name type="scientific">Hydrogenobaculum sp. (strain Y04AAS1)</name>
    <dbReference type="NCBI Taxonomy" id="380749"/>
    <lineage>
        <taxon>Bacteria</taxon>
        <taxon>Pseudomonadati</taxon>
        <taxon>Aquificota</taxon>
        <taxon>Aquificia</taxon>
        <taxon>Aquificales</taxon>
        <taxon>Aquificaceae</taxon>
        <taxon>Hydrogenobaculum</taxon>
    </lineage>
</organism>
<evidence type="ECO:0000255" key="1">
    <source>
        <dbReference type="HAMAP-Rule" id="MF_01307"/>
    </source>
</evidence>
<evidence type="ECO:0000305" key="2"/>
<dbReference type="EMBL" id="CP001130">
    <property type="protein sequence ID" value="ACG56972.1"/>
    <property type="molecule type" value="Genomic_DNA"/>
</dbReference>
<dbReference type="RefSeq" id="WP_012513328.1">
    <property type="nucleotide sequence ID" value="NC_011126.1"/>
</dbReference>
<dbReference type="SMR" id="B4U761"/>
<dbReference type="STRING" id="380749.HY04AAS1_0282"/>
<dbReference type="KEGG" id="hya:HY04AAS1_0282"/>
<dbReference type="eggNOG" id="COG0098">
    <property type="taxonomic scope" value="Bacteria"/>
</dbReference>
<dbReference type="HOGENOM" id="CLU_065898_2_2_0"/>
<dbReference type="OrthoDB" id="9809045at2"/>
<dbReference type="GO" id="GO:0015935">
    <property type="term" value="C:small ribosomal subunit"/>
    <property type="evidence" value="ECO:0007669"/>
    <property type="project" value="InterPro"/>
</dbReference>
<dbReference type="GO" id="GO:0019843">
    <property type="term" value="F:rRNA binding"/>
    <property type="evidence" value="ECO:0007669"/>
    <property type="project" value="UniProtKB-UniRule"/>
</dbReference>
<dbReference type="GO" id="GO:0003735">
    <property type="term" value="F:structural constituent of ribosome"/>
    <property type="evidence" value="ECO:0007669"/>
    <property type="project" value="InterPro"/>
</dbReference>
<dbReference type="GO" id="GO:0006412">
    <property type="term" value="P:translation"/>
    <property type="evidence" value="ECO:0007669"/>
    <property type="project" value="UniProtKB-UniRule"/>
</dbReference>
<dbReference type="FunFam" id="3.30.230.10:FF:000002">
    <property type="entry name" value="30S ribosomal protein S5"/>
    <property type="match status" value="1"/>
</dbReference>
<dbReference type="Gene3D" id="3.30.160.20">
    <property type="match status" value="1"/>
</dbReference>
<dbReference type="Gene3D" id="3.30.230.10">
    <property type="match status" value="1"/>
</dbReference>
<dbReference type="HAMAP" id="MF_01307_B">
    <property type="entry name" value="Ribosomal_uS5_B"/>
    <property type="match status" value="1"/>
</dbReference>
<dbReference type="InterPro" id="IPR020568">
    <property type="entry name" value="Ribosomal_Su5_D2-typ_SF"/>
</dbReference>
<dbReference type="InterPro" id="IPR000851">
    <property type="entry name" value="Ribosomal_uS5"/>
</dbReference>
<dbReference type="InterPro" id="IPR005712">
    <property type="entry name" value="Ribosomal_uS5_bac-type"/>
</dbReference>
<dbReference type="InterPro" id="IPR005324">
    <property type="entry name" value="Ribosomal_uS5_C"/>
</dbReference>
<dbReference type="InterPro" id="IPR013810">
    <property type="entry name" value="Ribosomal_uS5_N"/>
</dbReference>
<dbReference type="InterPro" id="IPR018192">
    <property type="entry name" value="Ribosomal_uS5_N_CS"/>
</dbReference>
<dbReference type="InterPro" id="IPR014721">
    <property type="entry name" value="Ribsml_uS5_D2-typ_fold_subgr"/>
</dbReference>
<dbReference type="NCBIfam" id="TIGR01021">
    <property type="entry name" value="rpsE_bact"/>
    <property type="match status" value="1"/>
</dbReference>
<dbReference type="PANTHER" id="PTHR48277">
    <property type="entry name" value="MITOCHONDRIAL RIBOSOMAL PROTEIN S5"/>
    <property type="match status" value="1"/>
</dbReference>
<dbReference type="PANTHER" id="PTHR48277:SF1">
    <property type="entry name" value="MITOCHONDRIAL RIBOSOMAL PROTEIN S5"/>
    <property type="match status" value="1"/>
</dbReference>
<dbReference type="Pfam" id="PF00333">
    <property type="entry name" value="Ribosomal_S5"/>
    <property type="match status" value="1"/>
</dbReference>
<dbReference type="Pfam" id="PF03719">
    <property type="entry name" value="Ribosomal_S5_C"/>
    <property type="match status" value="1"/>
</dbReference>
<dbReference type="SUPFAM" id="SSF54768">
    <property type="entry name" value="dsRNA-binding domain-like"/>
    <property type="match status" value="1"/>
</dbReference>
<dbReference type="SUPFAM" id="SSF54211">
    <property type="entry name" value="Ribosomal protein S5 domain 2-like"/>
    <property type="match status" value="1"/>
</dbReference>
<dbReference type="PROSITE" id="PS00585">
    <property type="entry name" value="RIBOSOMAL_S5"/>
    <property type="match status" value="1"/>
</dbReference>
<dbReference type="PROSITE" id="PS50881">
    <property type="entry name" value="S5_DSRBD"/>
    <property type="match status" value="1"/>
</dbReference>
<name>RS5_HYDS0</name>